<accession>P17000</accession>
<accession>Q84002</accession>
<accession>Q84003</accession>
<name>HEMA_I71A3</name>
<dbReference type="EMBL" id="M24720">
    <property type="protein sequence ID" value="AAA43111.1"/>
    <property type="status" value="ALT_SEQ"/>
    <property type="molecule type" value="Genomic_RNA"/>
</dbReference>
<dbReference type="SMR" id="P17000"/>
<dbReference type="GlyCosmos" id="P17000">
    <property type="glycosylation" value="8 sites, No reported glycans"/>
</dbReference>
<dbReference type="GO" id="GO:0020002">
    <property type="term" value="C:host cell plasma membrane"/>
    <property type="evidence" value="ECO:0007669"/>
    <property type="project" value="UniProtKB-SubCell"/>
</dbReference>
<dbReference type="GO" id="GO:0016020">
    <property type="term" value="C:membrane"/>
    <property type="evidence" value="ECO:0007669"/>
    <property type="project" value="UniProtKB-UniRule"/>
</dbReference>
<dbReference type="GO" id="GO:0019031">
    <property type="term" value="C:viral envelope"/>
    <property type="evidence" value="ECO:0007669"/>
    <property type="project" value="UniProtKB-UniRule"/>
</dbReference>
<dbReference type="GO" id="GO:0055036">
    <property type="term" value="C:virion membrane"/>
    <property type="evidence" value="ECO:0007669"/>
    <property type="project" value="UniProtKB-SubCell"/>
</dbReference>
<dbReference type="GO" id="GO:0046789">
    <property type="term" value="F:host cell surface receptor binding"/>
    <property type="evidence" value="ECO:0007669"/>
    <property type="project" value="UniProtKB-UniRule"/>
</dbReference>
<dbReference type="GO" id="GO:0075512">
    <property type="term" value="P:clathrin-dependent endocytosis of virus by host cell"/>
    <property type="evidence" value="ECO:0007669"/>
    <property type="project" value="UniProtKB-UniRule"/>
</dbReference>
<dbReference type="GO" id="GO:0039654">
    <property type="term" value="P:fusion of virus membrane with host endosome membrane"/>
    <property type="evidence" value="ECO:0007669"/>
    <property type="project" value="UniProtKB-UniRule"/>
</dbReference>
<dbReference type="GO" id="GO:0019064">
    <property type="term" value="P:fusion of virus membrane with host plasma membrane"/>
    <property type="evidence" value="ECO:0007669"/>
    <property type="project" value="InterPro"/>
</dbReference>
<dbReference type="GO" id="GO:0046761">
    <property type="term" value="P:viral budding from plasma membrane"/>
    <property type="evidence" value="ECO:0007669"/>
    <property type="project" value="UniProtKB-UniRule"/>
</dbReference>
<dbReference type="GO" id="GO:0019062">
    <property type="term" value="P:virion attachment to host cell"/>
    <property type="evidence" value="ECO:0007669"/>
    <property type="project" value="UniProtKB-KW"/>
</dbReference>
<dbReference type="FunFam" id="3.90.20.10:FF:000001">
    <property type="entry name" value="Hemagglutinin"/>
    <property type="match status" value="1"/>
</dbReference>
<dbReference type="FunFam" id="3.90.209.20:FF:000001">
    <property type="entry name" value="Hemagglutinin"/>
    <property type="match status" value="1"/>
</dbReference>
<dbReference type="Gene3D" id="3.90.20.10">
    <property type="match status" value="1"/>
</dbReference>
<dbReference type="Gene3D" id="3.90.209.20">
    <property type="match status" value="1"/>
</dbReference>
<dbReference type="HAMAP" id="MF_04072">
    <property type="entry name" value="INFV_HEMA"/>
    <property type="match status" value="1"/>
</dbReference>
<dbReference type="InterPro" id="IPR008980">
    <property type="entry name" value="Capsid_hemagglutn"/>
</dbReference>
<dbReference type="InterPro" id="IPR013828">
    <property type="entry name" value="Hemagglutn_HA1_a/b_dom_sf"/>
</dbReference>
<dbReference type="InterPro" id="IPR000149">
    <property type="entry name" value="Hemagglutn_influenz_A"/>
</dbReference>
<dbReference type="InterPro" id="IPR001364">
    <property type="entry name" value="Hemagglutn_influenz_A/B"/>
</dbReference>
<dbReference type="Pfam" id="PF00509">
    <property type="entry name" value="Hemagglutinin"/>
    <property type="match status" value="1"/>
</dbReference>
<dbReference type="PRINTS" id="PR00330">
    <property type="entry name" value="HEMAGGLUTN1"/>
</dbReference>
<dbReference type="PRINTS" id="PR00329">
    <property type="entry name" value="HEMAGGLUTN12"/>
</dbReference>
<dbReference type="SUPFAM" id="SSF58064">
    <property type="entry name" value="Influenza hemagglutinin (stalk)"/>
    <property type="match status" value="1"/>
</dbReference>
<dbReference type="SUPFAM" id="SSF49818">
    <property type="entry name" value="Viral protein domain"/>
    <property type="match status" value="1"/>
</dbReference>
<organism>
    <name type="scientific">Influenza A virus (strain A/Equine/Tokyo/1971 H3N2)</name>
    <dbReference type="NCBI Taxonomy" id="11418"/>
    <lineage>
        <taxon>Viruses</taxon>
        <taxon>Riboviria</taxon>
        <taxon>Orthornavirae</taxon>
        <taxon>Negarnaviricota</taxon>
        <taxon>Polyploviricotina</taxon>
        <taxon>Insthoviricetes</taxon>
        <taxon>Articulavirales</taxon>
        <taxon>Orthomyxoviridae</taxon>
        <taxon>Alphainfluenzavirus</taxon>
        <taxon>Alphainfluenzavirus influenzae</taxon>
        <taxon>Influenza A virus</taxon>
    </lineage>
</organism>
<gene>
    <name evidence="1" type="primary">HA</name>
</gene>
<protein>
    <recommendedName>
        <fullName evidence="1">Hemagglutinin</fullName>
    </recommendedName>
    <component>
        <recommendedName>
            <fullName evidence="1">Hemagglutinin HA1 chain</fullName>
        </recommendedName>
    </component>
    <component>
        <recommendedName>
            <fullName evidence="1">Hemagglutinin HA2 chain</fullName>
        </recommendedName>
    </component>
</protein>
<proteinExistence type="inferred from homology"/>
<sequence length="565" mass="63580">MKTTTILILLTHWVHSQIPINDNNTATLCLGHHAVANGTLVKTLTDDQIEVTNATELVQSTSTGKICNNSYRVLDGKNCTLIDAMLGDPHCDVFQYENWDLFVERSSAFSNCYPYDVPNYALLRSIVASSGTLEFMAEGFTWTGVTQNGGSSSCRRGSADSFFSRLNWLTKSGSSYSTLNVTMPNNDNFDKLYVWGIHHPSTNNEQTKLYVQASGRVTVSTKRSQQTILPNIGLRPWVRGQSGRVSIYWTIVKPGDVLMINSNGNLIAPRGYFKIRAGKSSIMRSDAPIDTCVSECITPNGSIPNDKPFQNVNKITYGKCPKYVKQSTLKLATGMRNIPGKRLRGIFGAIAGFIENGWEGMIDGWYGFRHQNSEGTGQAGDLKSTQAAIDQINGKLNRVIEKTNEKFHQIEKEFSEVEGRIQDLEKYVEDTKIDLWSYNAELLVTLENQHTIDLTDAEMNKLFERTRRQLRENAEDIGNGCFKIYHKCDNACIESIRNGTYDHDIYRDEALNNRFQIKGVELKSGYKDWILWISFAISCFLICVVLLGFIMWACQKGNIRCNICI</sequence>
<feature type="signal peptide" evidence="1">
    <location>
        <begin position="1"/>
        <end position="16"/>
    </location>
</feature>
<feature type="chain" id="PRO_0000440422" description="Hemagglutinin" evidence="1">
    <location>
        <begin position="17"/>
        <end position="565"/>
    </location>
</feature>
<feature type="chain" id="PRO_0000039006" description="Hemagglutinin HA1 chain">
    <location>
        <begin position="17"/>
        <end position="343"/>
    </location>
</feature>
<feature type="chain" id="PRO_0000039007" description="Hemagglutinin HA2 chain" evidence="1">
    <location>
        <begin position="345"/>
        <end position="565"/>
    </location>
</feature>
<feature type="topological domain" description="Extracellular" evidence="1">
    <location>
        <begin position="17"/>
        <end position="529"/>
    </location>
</feature>
<feature type="transmembrane region" description="Helical" evidence="1">
    <location>
        <begin position="530"/>
        <end position="550"/>
    </location>
</feature>
<feature type="topological domain" description="Cytoplasmic" evidence="1">
    <location>
        <begin position="551"/>
        <end position="565"/>
    </location>
</feature>
<feature type="site" description="Cleavage; by host" evidence="1">
    <location>
        <begin position="344"/>
        <end position="345"/>
    </location>
</feature>
<feature type="lipid moiety-binding region" description="S-palmitoyl cysteine; by host" evidence="1">
    <location>
        <position position="554"/>
    </location>
</feature>
<feature type="lipid moiety-binding region" description="S-palmitoyl cysteine; by host" evidence="1">
    <location>
        <position position="561"/>
    </location>
</feature>
<feature type="lipid moiety-binding region" description="S-palmitoyl cysteine; by host" evidence="1">
    <location>
        <position position="564"/>
    </location>
</feature>
<feature type="glycosylation site" description="N-linked (GlcNAc...) asparagine; by host" evidence="1">
    <location>
        <position position="23"/>
    </location>
</feature>
<feature type="glycosylation site" description="N-linked (GlcNAc...) asparagine; by host" evidence="1">
    <location>
        <position position="37"/>
    </location>
</feature>
<feature type="glycosylation site" description="N-linked (GlcNAc...) asparagine; by host" evidence="1">
    <location>
        <position position="53"/>
    </location>
</feature>
<feature type="glycosylation site" description="N-linked (GlcNAc...) asparagine; by host" evidence="1">
    <location>
        <position position="68"/>
    </location>
</feature>
<feature type="glycosylation site" description="N-linked (GlcNAc...) asparagine; by host" evidence="1">
    <location>
        <position position="78"/>
    </location>
</feature>
<feature type="glycosylation site" description="N-linked (GlcNAc...) asparagine; by host" evidence="1">
    <location>
        <position position="180"/>
    </location>
</feature>
<feature type="glycosylation site" description="N-linked (GlcNAc...) asparagine; by host" evidence="1">
    <location>
        <position position="300"/>
    </location>
</feature>
<feature type="glycosylation site" description="N-linked (GlcNAc...) asparagine; by host" evidence="1">
    <location>
        <position position="498"/>
    </location>
</feature>
<feature type="disulfide bond" description="Interchain (between HA1 and HA2 chains)" evidence="1">
    <location>
        <begin position="29"/>
        <end position="481"/>
    </location>
</feature>
<feature type="disulfide bond" evidence="1">
    <location>
        <begin position="67"/>
        <end position="292"/>
    </location>
</feature>
<feature type="disulfide bond" evidence="1">
    <location>
        <begin position="79"/>
        <end position="91"/>
    </location>
</feature>
<feature type="disulfide bond" evidence="1">
    <location>
        <begin position="112"/>
        <end position="154"/>
    </location>
</feature>
<feature type="disulfide bond" evidence="1">
    <location>
        <begin position="296"/>
        <end position="320"/>
    </location>
</feature>
<feature type="disulfide bond" evidence="1">
    <location>
        <begin position="488"/>
        <end position="492"/>
    </location>
</feature>
<reference key="1">
    <citation type="journal article" date="1989" name="Virology">
        <title>Evolution of the hemagglutinin of equine H3 influenza viruses.</title>
        <authorList>
            <person name="Kawaoka Y."/>
            <person name="Bean W.J."/>
            <person name="Webster R.G."/>
        </authorList>
    </citation>
    <scope>NUCLEOTIDE SEQUENCE [GENOMIC RNA]</scope>
</reference>
<evidence type="ECO:0000255" key="1">
    <source>
        <dbReference type="HAMAP-Rule" id="MF_04072"/>
    </source>
</evidence>
<evidence type="ECO:0000305" key="2"/>
<organismHost>
    <name type="scientific">Aves</name>
    <dbReference type="NCBI Taxonomy" id="8782"/>
</organismHost>
<organismHost>
    <name type="scientific">Cetacea</name>
    <name type="common">whales</name>
    <dbReference type="NCBI Taxonomy" id="9721"/>
</organismHost>
<organismHost>
    <name type="scientific">Equus caballus</name>
    <name type="common">Horse</name>
    <dbReference type="NCBI Taxonomy" id="9796"/>
</organismHost>
<organismHost>
    <name type="scientific">Homo sapiens</name>
    <name type="common">Human</name>
    <dbReference type="NCBI Taxonomy" id="9606"/>
</organismHost>
<organismHost>
    <name type="scientific">Phocidae</name>
    <name type="common">true seals</name>
    <dbReference type="NCBI Taxonomy" id="9709"/>
</organismHost>
<organismHost>
    <name type="scientific">Sus scrofa</name>
    <name type="common">Pig</name>
    <dbReference type="NCBI Taxonomy" id="9823"/>
</organismHost>
<comment type="function">
    <text>Binds to sialic acid-containing receptors on the cell surface, bringing about the attachment of the virus particle to the cell. This attachment induces virion internalization of about two third of the virus particles through clathrin-dependent endocytosis and about one third through a clathrin- and caveolin-independent pathway. Plays a major role in the determination of host range restriction and virulence. Class I viral fusion protein. Responsible for penetration of the virus into the cell cytoplasm by mediating the fusion of the membrane of the endocytosed virus particle with the endosomal membrane. Low pH in endosomes induces an irreversible conformational change in HA2, releasing the fusion hydrophobic peptide. Several trimers are required to form a competent fusion pore.</text>
</comment>
<comment type="function">
    <text evidence="1">Binds to sialic acid-containing receptors on the cell surface, bringing about the attachment of the virus particle to the cell. This attachment induces virion internalization either through clathrin-dependent endocytosis or through clathrin- and caveolin-independent pathway. Plays a major role in the determination of host range restriction and virulence. Class I viral fusion protein. Responsible for penetration of the virus into the cell cytoplasm by mediating the fusion of the membrane of the endocytosed virus particle with the endosomal membrane. Low pH in endosomes induces an irreversible conformational change in HA2, releasing the fusion hydrophobic peptide. Several trimers are required to form a competent fusion pore.</text>
</comment>
<comment type="subunit">
    <text evidence="1">Homotrimer of disulfide-linked HA1-HA2.</text>
</comment>
<comment type="subcellular location">
    <subcellularLocation>
        <location evidence="1">Virion membrane</location>
        <topology evidence="1">Single-pass type I membrane protein</topology>
    </subcellularLocation>
    <subcellularLocation>
        <location evidence="1">Host apical cell membrane</location>
        <topology evidence="1">Single-pass type I membrane protein</topology>
    </subcellularLocation>
    <text evidence="1">Targeted to the apical plasma membrane in epithelial polarized cells through a signal present in the transmembrane domain. Associated with glycosphingolipid- and cholesterol-enriched detergent-resistant lipid rafts.</text>
</comment>
<comment type="PTM">
    <text evidence="1">Palmitoylated.</text>
</comment>
<comment type="PTM">
    <text evidence="1">In natural infection, inactive HA is matured into HA1 and HA2 outside the cell by one or more trypsin-like, arginine-specific endoprotease secreted by the bronchial epithelial cells. One identified protease that may be involved in this process is secreted in lungs by club cells.</text>
</comment>
<comment type="miscellaneous">
    <text>Major glycoprotein, comprises over 80% of the envelope proteins present in virus particle.</text>
</comment>
<comment type="miscellaneous">
    <text>The extent of infection into host organism is determined by HA. Influenza viruses bud from the apical surface of polarized epithelial cells (e.g. bronchial epithelial cells) into lumen of lungs and are therefore usually pneumotropic. The reason is that HA is cleaved by tryptase clara which is restricted to lungs. However, HAs of H5 and H7 pantropic avian viruses subtypes can be cleaved by furin and subtilisin-type enzymes, allowing the virus to grow in other organs than lungs.</text>
</comment>
<comment type="miscellaneous">
    <text evidence="2">The influenza A genome consist of 8 RNA segments. Genetic variation of hemagglutinin and/or neuraminidase genes results in the emergence of new influenza strains. The mechanism of variation can be the result of point mutations or the result of genetic reassortment between segments of two different strains.</text>
</comment>
<comment type="similarity">
    <text evidence="1">Belongs to the influenza viruses hemagglutinin family.</text>
</comment>
<keyword id="KW-1167">Clathrin- and caveolin-independent endocytosis of virus by host</keyword>
<keyword id="KW-1165">Clathrin-mediated endocytosis of virus by host</keyword>
<keyword id="KW-1015">Disulfide bond</keyword>
<keyword id="KW-1170">Fusion of virus membrane with host endosomal membrane</keyword>
<keyword id="KW-1168">Fusion of virus membrane with host membrane</keyword>
<keyword id="KW-0325">Glycoprotein</keyword>
<keyword id="KW-0348">Hemagglutinin</keyword>
<keyword id="KW-1032">Host cell membrane</keyword>
<keyword id="KW-1043">Host membrane</keyword>
<keyword id="KW-0945">Host-virus interaction</keyword>
<keyword id="KW-0449">Lipoprotein</keyword>
<keyword id="KW-0472">Membrane</keyword>
<keyword id="KW-0564">Palmitate</keyword>
<keyword id="KW-0732">Signal</keyword>
<keyword id="KW-0812">Transmembrane</keyword>
<keyword id="KW-1133">Transmembrane helix</keyword>
<keyword id="KW-1161">Viral attachment to host cell</keyword>
<keyword id="KW-0261">Viral envelope protein</keyword>
<keyword id="KW-1162">Viral penetration into host cytoplasm</keyword>
<keyword id="KW-0946">Virion</keyword>
<keyword id="KW-1164">Virus endocytosis by host</keyword>
<keyword id="KW-1160">Virus entry into host cell</keyword>